<protein>
    <recommendedName>
        <fullName>Putative aldolase class 2 protein PA3430</fullName>
    </recommendedName>
</protein>
<dbReference type="EMBL" id="AE004091">
    <property type="protein sequence ID" value="AAG06818.1"/>
    <property type="molecule type" value="Genomic_DNA"/>
</dbReference>
<dbReference type="PIR" id="D83216">
    <property type="entry name" value="D83216"/>
</dbReference>
<dbReference type="RefSeq" id="NP_252120.1">
    <property type="nucleotide sequence ID" value="NC_002516.2"/>
</dbReference>
<dbReference type="RefSeq" id="WP_003114490.1">
    <property type="nucleotide sequence ID" value="NZ_QZGE01000017.1"/>
</dbReference>
<dbReference type="SMR" id="Q9HYH5"/>
<dbReference type="STRING" id="208964.PA3430"/>
<dbReference type="PaxDb" id="208964-PA3430"/>
<dbReference type="DNASU" id="878949"/>
<dbReference type="GeneID" id="878949"/>
<dbReference type="KEGG" id="pae:PA3430"/>
<dbReference type="PATRIC" id="fig|208964.12.peg.3591"/>
<dbReference type="PseudoCAP" id="PA3430"/>
<dbReference type="HOGENOM" id="CLU_006033_0_0_6"/>
<dbReference type="InParanoid" id="Q9HYH5"/>
<dbReference type="OrthoDB" id="8859181at2"/>
<dbReference type="PhylomeDB" id="Q9HYH5"/>
<dbReference type="BioCyc" id="PAER208964:G1FZ6-3497-MONOMER"/>
<dbReference type="Proteomes" id="UP000002438">
    <property type="component" value="Chromosome"/>
</dbReference>
<dbReference type="GO" id="GO:0005856">
    <property type="term" value="C:cytoskeleton"/>
    <property type="evidence" value="ECO:0000318"/>
    <property type="project" value="GO_Central"/>
</dbReference>
<dbReference type="GO" id="GO:0051015">
    <property type="term" value="F:actin filament binding"/>
    <property type="evidence" value="ECO:0000318"/>
    <property type="project" value="GO_Central"/>
</dbReference>
<dbReference type="GO" id="GO:0046872">
    <property type="term" value="F:metal ion binding"/>
    <property type="evidence" value="ECO:0007669"/>
    <property type="project" value="UniProtKB-KW"/>
</dbReference>
<dbReference type="GO" id="GO:0005996">
    <property type="term" value="P:monosaccharide metabolic process"/>
    <property type="evidence" value="ECO:0007669"/>
    <property type="project" value="UniProtKB-ARBA"/>
</dbReference>
<dbReference type="FunFam" id="3.40.225.10:FF:000013">
    <property type="entry name" value="Class II aldolase"/>
    <property type="match status" value="1"/>
</dbReference>
<dbReference type="Gene3D" id="3.40.225.10">
    <property type="entry name" value="Class II aldolase/adducin N-terminal domain"/>
    <property type="match status" value="1"/>
</dbReference>
<dbReference type="InterPro" id="IPR051017">
    <property type="entry name" value="Aldolase-II_Adducin_sf"/>
</dbReference>
<dbReference type="InterPro" id="IPR001303">
    <property type="entry name" value="Aldolase_II/adducin_N"/>
</dbReference>
<dbReference type="InterPro" id="IPR036409">
    <property type="entry name" value="Aldolase_II/adducin_N_sf"/>
</dbReference>
<dbReference type="NCBIfam" id="NF005451">
    <property type="entry name" value="PRK07044.1"/>
    <property type="match status" value="1"/>
</dbReference>
<dbReference type="PANTHER" id="PTHR10672">
    <property type="entry name" value="ADDUCIN"/>
    <property type="match status" value="1"/>
</dbReference>
<dbReference type="PANTHER" id="PTHR10672:SF3">
    <property type="entry name" value="PROTEIN HU-LI TAI SHAO"/>
    <property type="match status" value="1"/>
</dbReference>
<dbReference type="Pfam" id="PF00596">
    <property type="entry name" value="Aldolase_II"/>
    <property type="match status" value="1"/>
</dbReference>
<dbReference type="SMART" id="SM01007">
    <property type="entry name" value="Aldolase_II"/>
    <property type="match status" value="1"/>
</dbReference>
<dbReference type="SUPFAM" id="SSF53639">
    <property type="entry name" value="AraD/HMP-PK domain-like"/>
    <property type="match status" value="1"/>
</dbReference>
<proteinExistence type="inferred from homology"/>
<comment type="cofactor">
    <cofactor evidence="2">
        <name>Zn(2+)</name>
        <dbReference type="ChEBI" id="CHEBI:29105"/>
    </cofactor>
    <text evidence="2">Binds 1 zinc ion per subunit.</text>
</comment>
<comment type="similarity">
    <text evidence="2">Belongs to the aldolase class II family.</text>
</comment>
<gene>
    <name type="ordered locus">PA3430</name>
</gene>
<accession>Q9HYH5</accession>
<evidence type="ECO:0000250" key="1"/>
<evidence type="ECO:0000305" key="2"/>
<name>Y3430_PSEAE</name>
<reference key="1">
    <citation type="journal article" date="2000" name="Nature">
        <title>Complete genome sequence of Pseudomonas aeruginosa PAO1, an opportunistic pathogen.</title>
        <authorList>
            <person name="Stover C.K."/>
            <person name="Pham X.-Q.T."/>
            <person name="Erwin A.L."/>
            <person name="Mizoguchi S.D."/>
            <person name="Warrener P."/>
            <person name="Hickey M.J."/>
            <person name="Brinkman F.S.L."/>
            <person name="Hufnagle W.O."/>
            <person name="Kowalik D.J."/>
            <person name="Lagrou M."/>
            <person name="Garber R.L."/>
            <person name="Goltry L."/>
            <person name="Tolentino E."/>
            <person name="Westbrock-Wadman S."/>
            <person name="Yuan Y."/>
            <person name="Brody L.L."/>
            <person name="Coulter S.N."/>
            <person name="Folger K.R."/>
            <person name="Kas A."/>
            <person name="Larbig K."/>
            <person name="Lim R.M."/>
            <person name="Smith K.A."/>
            <person name="Spencer D.H."/>
            <person name="Wong G.K.-S."/>
            <person name="Wu Z."/>
            <person name="Paulsen I.T."/>
            <person name="Reizer J."/>
            <person name="Saier M.H. Jr."/>
            <person name="Hancock R.E.W."/>
            <person name="Lory S."/>
            <person name="Olson M.V."/>
        </authorList>
    </citation>
    <scope>NUCLEOTIDE SEQUENCE [LARGE SCALE GENOMIC DNA]</scope>
    <source>
        <strain>ATCC 15692 / DSM 22644 / CIP 104116 / JCM 14847 / LMG 12228 / 1C / PRS 101 / PAO1</strain>
    </source>
</reference>
<organism>
    <name type="scientific">Pseudomonas aeruginosa (strain ATCC 15692 / DSM 22644 / CIP 104116 / JCM 14847 / LMG 12228 / 1C / PRS 101 / PAO1)</name>
    <dbReference type="NCBI Taxonomy" id="208964"/>
    <lineage>
        <taxon>Bacteria</taxon>
        <taxon>Pseudomonadati</taxon>
        <taxon>Pseudomonadota</taxon>
        <taxon>Gammaproteobacteria</taxon>
        <taxon>Pseudomonadales</taxon>
        <taxon>Pseudomonadaceae</taxon>
        <taxon>Pseudomonas</taxon>
    </lineage>
</organism>
<feature type="chain" id="PRO_0000162935" description="Putative aldolase class 2 protein PA3430">
    <location>
        <begin position="1"/>
        <end position="259"/>
    </location>
</feature>
<feature type="binding site" evidence="1">
    <location>
        <position position="113"/>
    </location>
    <ligand>
        <name>Zn(2+)</name>
        <dbReference type="ChEBI" id="CHEBI:29105"/>
    </ligand>
</feature>
<feature type="binding site" evidence="1">
    <location>
        <position position="115"/>
    </location>
    <ligand>
        <name>Zn(2+)</name>
        <dbReference type="ChEBI" id="CHEBI:29105"/>
    </ligand>
</feature>
<feature type="binding site" evidence="1">
    <location>
        <position position="176"/>
    </location>
    <ligand>
        <name>Zn(2+)</name>
        <dbReference type="ChEBI" id="CHEBI:29105"/>
    </ligand>
</feature>
<keyword id="KW-0479">Metal-binding</keyword>
<keyword id="KW-1185">Reference proteome</keyword>
<keyword id="KW-0862">Zinc</keyword>
<sequence length="259" mass="28025">MTAVHSLPADVQAQVSAAEWQTRVDLAACYRLVALHGWDDLIFTHISAKVPGTEDFLINPFGLMFHEITASSLVKVDASGKKLMDSPYEINPAGYTIHSAVHEVRHDVECVLHTHTAAGIAVSCQKQGLLPLSQQSLFVLSSLSYHAYEGVALNHEEKARLQADLGASNFLILPNHGLLTCGGSIADTFLMMFTLQRACEVQVMAQSGGAELIHIPGQILAGARDMIAGVMRSKTGMGGQLAWPALLRKLDQQNPGYRQ</sequence>